<evidence type="ECO:0000255" key="1">
    <source>
        <dbReference type="HAMAP-Rule" id="MF_00099"/>
    </source>
</evidence>
<comment type="function">
    <text evidence="1">Involved in chemotaxis. Part of a chemotaxis signal transduction system that modulates chemotaxis in response to various stimuli. Catalyzes the demethylation of specific methylglutamate residues introduced into the chemoreceptors (methyl-accepting chemotaxis proteins or MCP) by CheR. Also mediates the irreversible deamidation of specific glutamine residues to glutamic acid.</text>
</comment>
<comment type="catalytic activity">
    <reaction evidence="1">
        <text>[protein]-L-glutamate 5-O-methyl ester + H2O = L-glutamyl-[protein] + methanol + H(+)</text>
        <dbReference type="Rhea" id="RHEA:23236"/>
        <dbReference type="Rhea" id="RHEA-COMP:10208"/>
        <dbReference type="Rhea" id="RHEA-COMP:10311"/>
        <dbReference type="ChEBI" id="CHEBI:15377"/>
        <dbReference type="ChEBI" id="CHEBI:15378"/>
        <dbReference type="ChEBI" id="CHEBI:17790"/>
        <dbReference type="ChEBI" id="CHEBI:29973"/>
        <dbReference type="ChEBI" id="CHEBI:82795"/>
        <dbReference type="EC" id="3.1.1.61"/>
    </reaction>
</comment>
<comment type="catalytic activity">
    <reaction evidence="1">
        <text>L-glutaminyl-[protein] + H2O = L-glutamyl-[protein] + NH4(+)</text>
        <dbReference type="Rhea" id="RHEA:16441"/>
        <dbReference type="Rhea" id="RHEA-COMP:10207"/>
        <dbReference type="Rhea" id="RHEA-COMP:10208"/>
        <dbReference type="ChEBI" id="CHEBI:15377"/>
        <dbReference type="ChEBI" id="CHEBI:28938"/>
        <dbReference type="ChEBI" id="CHEBI:29973"/>
        <dbReference type="ChEBI" id="CHEBI:30011"/>
        <dbReference type="EC" id="3.5.1.44"/>
    </reaction>
</comment>
<comment type="subcellular location">
    <subcellularLocation>
        <location evidence="1">Cytoplasm</location>
    </subcellularLocation>
</comment>
<comment type="domain">
    <text evidence="1">Contains a C-terminal catalytic domain, and an N-terminal region which modulates catalytic activity.</text>
</comment>
<comment type="PTM">
    <text evidence="1">Phosphorylated by CheA. Phosphorylation of the N-terminal regulatory domain activates the methylesterase activity.</text>
</comment>
<comment type="similarity">
    <text evidence="1">Belongs to the CheB family.</text>
</comment>
<organism>
    <name type="scientific">Cupriavidus metallidurans (strain ATCC 43123 / DSM 2839 / NBRC 102507 / CH34)</name>
    <name type="common">Ralstonia metallidurans</name>
    <dbReference type="NCBI Taxonomy" id="266264"/>
    <lineage>
        <taxon>Bacteria</taxon>
        <taxon>Pseudomonadati</taxon>
        <taxon>Pseudomonadota</taxon>
        <taxon>Betaproteobacteria</taxon>
        <taxon>Burkholderiales</taxon>
        <taxon>Burkholderiaceae</taxon>
        <taxon>Cupriavidus</taxon>
    </lineage>
</organism>
<name>CHEB2_CUPMC</name>
<feature type="chain" id="PRO_0000264301" description="Protein-glutamate methylesterase/protein-glutamine glutaminase 2">
    <location>
        <begin position="1"/>
        <end position="338"/>
    </location>
</feature>
<feature type="domain" description="Response regulatory" evidence="1">
    <location>
        <begin position="2"/>
        <end position="119"/>
    </location>
</feature>
<feature type="domain" description="CheB-type methylesterase" evidence="1">
    <location>
        <begin position="145"/>
        <end position="330"/>
    </location>
</feature>
<feature type="active site" evidence="1">
    <location>
        <position position="158"/>
    </location>
</feature>
<feature type="active site" evidence="1">
    <location>
        <position position="185"/>
    </location>
</feature>
<feature type="active site" evidence="1">
    <location>
        <position position="278"/>
    </location>
</feature>
<feature type="modified residue" description="4-aspartylphosphate" evidence="1">
    <location>
        <position position="53"/>
    </location>
</feature>
<geneLocation type="plasmid">
    <name>megaplasmid CH34</name>
</geneLocation>
<accession>Q1LG90</accession>
<reference key="1">
    <citation type="journal article" date="2010" name="PLoS ONE">
        <title>The complete genome sequence of Cupriavidus metallidurans strain CH34, a master survivalist in harsh and anthropogenic environments.</title>
        <authorList>
            <person name="Janssen P.J."/>
            <person name="Van Houdt R."/>
            <person name="Moors H."/>
            <person name="Monsieurs P."/>
            <person name="Morin N."/>
            <person name="Michaux A."/>
            <person name="Benotmane M.A."/>
            <person name="Leys N."/>
            <person name="Vallaeys T."/>
            <person name="Lapidus A."/>
            <person name="Monchy S."/>
            <person name="Medigue C."/>
            <person name="Taghavi S."/>
            <person name="McCorkle S."/>
            <person name="Dunn J."/>
            <person name="van der Lelie D."/>
            <person name="Mergeay M."/>
        </authorList>
    </citation>
    <scope>NUCLEOTIDE SEQUENCE [LARGE SCALE GENOMIC DNA]</scope>
    <source>
        <strain>ATCC 43123 / DSM 2839 / NBRC 102507 / CH34</strain>
    </source>
</reference>
<keyword id="KW-0145">Chemotaxis</keyword>
<keyword id="KW-0963">Cytoplasm</keyword>
<keyword id="KW-0378">Hydrolase</keyword>
<keyword id="KW-0597">Phosphoprotein</keyword>
<keyword id="KW-0614">Plasmid</keyword>
<keyword id="KW-1185">Reference proteome</keyword>
<gene>
    <name evidence="1" type="primary">cheB2</name>
    <name type="ordered locus">Rmet_3968</name>
</gene>
<sequence length="338" mass="35253">MRIGIVNDSALAVAALRRALALDTTLEIAWIAGDGEEAVRMAATQTPDLILMDLLMPVMDGVEATRRIMAESPCAIVVVTMDLGRNANQVFDAMGHGAIDAVDTPTLTDSDTKLAAGPLLRKIRNIARLLGGRGQAPHPLAAATPTPTAPRLVAIGASAGGPAALATLLGALPADFGAAVVAVQHVDEAFAQGMAEWLDAQCQLPVRLARAGEVPQAGAVVLAGTNDHLRLTSAGRLIYTPDPCDYLYRPSIDVFFESVVEHWRGEAIGVLLTGMGRDGAQGLKAMRERGFQTIAQDQATSAVYGMPKAAATLGAASEILPLQKIAPRLVMTCGGGRR</sequence>
<protein>
    <recommendedName>
        <fullName evidence="1">Protein-glutamate methylesterase/protein-glutamine glutaminase 2</fullName>
        <ecNumber evidence="1">3.1.1.61</ecNumber>
        <ecNumber evidence="1">3.5.1.44</ecNumber>
    </recommendedName>
</protein>
<proteinExistence type="inferred from homology"/>
<dbReference type="EC" id="3.1.1.61" evidence="1"/>
<dbReference type="EC" id="3.5.1.44" evidence="1"/>
<dbReference type="EMBL" id="CP000353">
    <property type="protein sequence ID" value="ABF10836.1"/>
    <property type="molecule type" value="Genomic_DNA"/>
</dbReference>
<dbReference type="RefSeq" id="WP_011518475.1">
    <property type="nucleotide sequence ID" value="NC_007974.2"/>
</dbReference>
<dbReference type="SMR" id="Q1LG90"/>
<dbReference type="KEGG" id="rme:Rmet_3968"/>
<dbReference type="eggNOG" id="COG2201">
    <property type="taxonomic scope" value="Bacteria"/>
</dbReference>
<dbReference type="HOGENOM" id="CLU_000445_51_0_4"/>
<dbReference type="Proteomes" id="UP000002429">
    <property type="component" value="Plasmid megaplasmid CH34"/>
</dbReference>
<dbReference type="GO" id="GO:0005737">
    <property type="term" value="C:cytoplasm"/>
    <property type="evidence" value="ECO:0007669"/>
    <property type="project" value="UniProtKB-SubCell"/>
</dbReference>
<dbReference type="GO" id="GO:0000156">
    <property type="term" value="F:phosphorelay response regulator activity"/>
    <property type="evidence" value="ECO:0007669"/>
    <property type="project" value="InterPro"/>
</dbReference>
<dbReference type="GO" id="GO:0008984">
    <property type="term" value="F:protein-glutamate methylesterase activity"/>
    <property type="evidence" value="ECO:0007669"/>
    <property type="project" value="UniProtKB-UniRule"/>
</dbReference>
<dbReference type="GO" id="GO:0050568">
    <property type="term" value="F:protein-glutamine glutaminase activity"/>
    <property type="evidence" value="ECO:0007669"/>
    <property type="project" value="UniProtKB-UniRule"/>
</dbReference>
<dbReference type="GO" id="GO:0006935">
    <property type="term" value="P:chemotaxis"/>
    <property type="evidence" value="ECO:0007669"/>
    <property type="project" value="UniProtKB-UniRule"/>
</dbReference>
<dbReference type="CDD" id="cd16432">
    <property type="entry name" value="CheB_Rec"/>
    <property type="match status" value="1"/>
</dbReference>
<dbReference type="CDD" id="cd17541">
    <property type="entry name" value="REC_CheB-like"/>
    <property type="match status" value="1"/>
</dbReference>
<dbReference type="Gene3D" id="3.40.50.2300">
    <property type="match status" value="1"/>
</dbReference>
<dbReference type="Gene3D" id="3.40.50.180">
    <property type="entry name" value="Methylesterase CheB, C-terminal domain"/>
    <property type="match status" value="1"/>
</dbReference>
<dbReference type="HAMAP" id="MF_00099">
    <property type="entry name" value="CheB_chemtxs"/>
    <property type="match status" value="1"/>
</dbReference>
<dbReference type="InterPro" id="IPR008248">
    <property type="entry name" value="CheB-like"/>
</dbReference>
<dbReference type="InterPro" id="IPR035909">
    <property type="entry name" value="CheB_C"/>
</dbReference>
<dbReference type="InterPro" id="IPR011006">
    <property type="entry name" value="CheY-like_superfamily"/>
</dbReference>
<dbReference type="InterPro" id="IPR000673">
    <property type="entry name" value="Sig_transdc_resp-reg_Me-estase"/>
</dbReference>
<dbReference type="InterPro" id="IPR001789">
    <property type="entry name" value="Sig_transdc_resp-reg_receiver"/>
</dbReference>
<dbReference type="NCBIfam" id="NF001965">
    <property type="entry name" value="PRK00742.1"/>
    <property type="match status" value="1"/>
</dbReference>
<dbReference type="NCBIfam" id="NF009206">
    <property type="entry name" value="PRK12555.1"/>
    <property type="match status" value="1"/>
</dbReference>
<dbReference type="PANTHER" id="PTHR42872">
    <property type="entry name" value="PROTEIN-GLUTAMATE METHYLESTERASE/PROTEIN-GLUTAMINE GLUTAMINASE"/>
    <property type="match status" value="1"/>
</dbReference>
<dbReference type="PANTHER" id="PTHR42872:SF6">
    <property type="entry name" value="PROTEIN-GLUTAMATE METHYLESTERASE_PROTEIN-GLUTAMINE GLUTAMINASE"/>
    <property type="match status" value="1"/>
</dbReference>
<dbReference type="Pfam" id="PF01339">
    <property type="entry name" value="CheB_methylest"/>
    <property type="match status" value="1"/>
</dbReference>
<dbReference type="Pfam" id="PF00072">
    <property type="entry name" value="Response_reg"/>
    <property type="match status" value="1"/>
</dbReference>
<dbReference type="PIRSF" id="PIRSF000876">
    <property type="entry name" value="RR_chemtxs_CheB"/>
    <property type="match status" value="1"/>
</dbReference>
<dbReference type="SMART" id="SM00448">
    <property type="entry name" value="REC"/>
    <property type="match status" value="1"/>
</dbReference>
<dbReference type="SUPFAM" id="SSF52172">
    <property type="entry name" value="CheY-like"/>
    <property type="match status" value="1"/>
</dbReference>
<dbReference type="SUPFAM" id="SSF52738">
    <property type="entry name" value="Methylesterase CheB, C-terminal domain"/>
    <property type="match status" value="1"/>
</dbReference>
<dbReference type="PROSITE" id="PS50122">
    <property type="entry name" value="CHEB"/>
    <property type="match status" value="1"/>
</dbReference>
<dbReference type="PROSITE" id="PS50110">
    <property type="entry name" value="RESPONSE_REGULATORY"/>
    <property type="match status" value="1"/>
</dbReference>